<gene>
    <name type="primary">gtf2h3</name>
    <name type="synonym">tfiih3</name>
    <name type="ORF">DDB_G0275517</name>
</gene>
<feature type="chain" id="PRO_0000329320" description="General transcription factor IIH subunit 3">
    <location>
        <begin position="1"/>
        <end position="372"/>
    </location>
</feature>
<feature type="zinc finger region" description="C4-type">
    <location>
        <begin position="323"/>
        <end position="340"/>
    </location>
</feature>
<feature type="region of interest" description="Disordered" evidence="3">
    <location>
        <begin position="40"/>
        <end position="78"/>
    </location>
</feature>
<feature type="compositionally biased region" description="Polar residues" evidence="3">
    <location>
        <begin position="50"/>
        <end position="60"/>
    </location>
</feature>
<feature type="compositionally biased region" description="Low complexity" evidence="3">
    <location>
        <begin position="61"/>
        <end position="78"/>
    </location>
</feature>
<name>TF2H3_DICDI</name>
<evidence type="ECO:0000250" key="1"/>
<evidence type="ECO:0000250" key="2">
    <source>
        <dbReference type="UniProtKB" id="Q13889"/>
    </source>
</evidence>
<evidence type="ECO:0000256" key="3">
    <source>
        <dbReference type="SAM" id="MobiDB-lite"/>
    </source>
</evidence>
<evidence type="ECO:0000305" key="4"/>
<reference key="1">
    <citation type="journal article" date="2002" name="Nature">
        <title>Sequence and analysis of chromosome 2 of Dictyostelium discoideum.</title>
        <authorList>
            <person name="Gloeckner G."/>
            <person name="Eichinger L."/>
            <person name="Szafranski K."/>
            <person name="Pachebat J.A."/>
            <person name="Bankier A.T."/>
            <person name="Dear P.H."/>
            <person name="Lehmann R."/>
            <person name="Baumgart C."/>
            <person name="Parra G."/>
            <person name="Abril J.F."/>
            <person name="Guigo R."/>
            <person name="Kumpf K."/>
            <person name="Tunggal B."/>
            <person name="Cox E.C."/>
            <person name="Quail M.A."/>
            <person name="Platzer M."/>
            <person name="Rosenthal A."/>
            <person name="Noegel A.A."/>
        </authorList>
    </citation>
    <scope>NUCLEOTIDE SEQUENCE [LARGE SCALE GENOMIC DNA]</scope>
    <source>
        <strain>AX4</strain>
    </source>
</reference>
<reference key="2">
    <citation type="journal article" date="2005" name="Nature">
        <title>The genome of the social amoeba Dictyostelium discoideum.</title>
        <authorList>
            <person name="Eichinger L."/>
            <person name="Pachebat J.A."/>
            <person name="Gloeckner G."/>
            <person name="Rajandream M.A."/>
            <person name="Sucgang R."/>
            <person name="Berriman M."/>
            <person name="Song J."/>
            <person name="Olsen R."/>
            <person name="Szafranski K."/>
            <person name="Xu Q."/>
            <person name="Tunggal B."/>
            <person name="Kummerfeld S."/>
            <person name="Madera M."/>
            <person name="Konfortov B.A."/>
            <person name="Rivero F."/>
            <person name="Bankier A.T."/>
            <person name="Lehmann R."/>
            <person name="Hamlin N."/>
            <person name="Davies R."/>
            <person name="Gaudet P."/>
            <person name="Fey P."/>
            <person name="Pilcher K."/>
            <person name="Chen G."/>
            <person name="Saunders D."/>
            <person name="Sodergren E.J."/>
            <person name="Davis P."/>
            <person name="Kerhornou A."/>
            <person name="Nie X."/>
            <person name="Hall N."/>
            <person name="Anjard C."/>
            <person name="Hemphill L."/>
            <person name="Bason N."/>
            <person name="Farbrother P."/>
            <person name="Desany B."/>
            <person name="Just E."/>
            <person name="Morio T."/>
            <person name="Rost R."/>
            <person name="Churcher C.M."/>
            <person name="Cooper J."/>
            <person name="Haydock S."/>
            <person name="van Driessche N."/>
            <person name="Cronin A."/>
            <person name="Goodhead I."/>
            <person name="Muzny D.M."/>
            <person name="Mourier T."/>
            <person name="Pain A."/>
            <person name="Lu M."/>
            <person name="Harper D."/>
            <person name="Lindsay R."/>
            <person name="Hauser H."/>
            <person name="James K.D."/>
            <person name="Quiles M."/>
            <person name="Madan Babu M."/>
            <person name="Saito T."/>
            <person name="Buchrieser C."/>
            <person name="Wardroper A."/>
            <person name="Felder M."/>
            <person name="Thangavelu M."/>
            <person name="Johnson D."/>
            <person name="Knights A."/>
            <person name="Loulseged H."/>
            <person name="Mungall K.L."/>
            <person name="Oliver K."/>
            <person name="Price C."/>
            <person name="Quail M.A."/>
            <person name="Urushihara H."/>
            <person name="Hernandez J."/>
            <person name="Rabbinowitsch E."/>
            <person name="Steffen D."/>
            <person name="Sanders M."/>
            <person name="Ma J."/>
            <person name="Kohara Y."/>
            <person name="Sharp S."/>
            <person name="Simmonds M.N."/>
            <person name="Spiegler S."/>
            <person name="Tivey A."/>
            <person name="Sugano S."/>
            <person name="White B."/>
            <person name="Walker D."/>
            <person name="Woodward J.R."/>
            <person name="Winckler T."/>
            <person name="Tanaka Y."/>
            <person name="Shaulsky G."/>
            <person name="Schleicher M."/>
            <person name="Weinstock G.M."/>
            <person name="Rosenthal A."/>
            <person name="Cox E.C."/>
            <person name="Chisholm R.L."/>
            <person name="Gibbs R.A."/>
            <person name="Loomis W.F."/>
            <person name="Platzer M."/>
            <person name="Kay R.R."/>
            <person name="Williams J.G."/>
            <person name="Dear P.H."/>
            <person name="Noegel A.A."/>
            <person name="Barrell B.G."/>
            <person name="Kuspa A."/>
        </authorList>
    </citation>
    <scope>NUCLEOTIDE SEQUENCE [LARGE SCALE GENOMIC DNA]</scope>
    <source>
        <strain>AX4</strain>
    </source>
</reference>
<organism>
    <name type="scientific">Dictyostelium discoideum</name>
    <name type="common">Social amoeba</name>
    <dbReference type="NCBI Taxonomy" id="44689"/>
    <lineage>
        <taxon>Eukaryota</taxon>
        <taxon>Amoebozoa</taxon>
        <taxon>Evosea</taxon>
        <taxon>Eumycetozoa</taxon>
        <taxon>Dictyostelia</taxon>
        <taxon>Dictyosteliales</taxon>
        <taxon>Dictyosteliaceae</taxon>
        <taxon>Dictyostelium</taxon>
    </lineage>
</organism>
<keyword id="KW-0227">DNA damage</keyword>
<keyword id="KW-0234">DNA repair</keyword>
<keyword id="KW-0479">Metal-binding</keyword>
<keyword id="KW-0539">Nucleus</keyword>
<keyword id="KW-1185">Reference proteome</keyword>
<keyword id="KW-0804">Transcription</keyword>
<keyword id="KW-0805">Transcription regulation</keyword>
<keyword id="KW-0862">Zinc</keyword>
<keyword id="KW-0863">Zinc-finger</keyword>
<sequence>MNNEGSAVINEDDDTSLLVVILDCNVYSWGNREKSLQDAISGMNDDNDSSSRYNGSTTIGNNNNNNNNNNSNNNNNVNKRLINTSKNNYIGFNKFLEHFMVFINAYLMLNQENQLAIICSKIGESSFVFPQSNIDQYQQEQQELEQRQLNENGELLPTPNKTIQGQILAKLQKLDLEIKHDQTDILSSSFSASMSIALCYINRIKRETPTIKPRILVFNISPDVSSQYISVMNCIFSSQKQSIPVDSCILSQSDSTFLQQASHLTSGIYLKPQKQELLSQYLLTTFLLDTLSRKSLAYPTLKSVDYRASCFCHKRIVDIGYVCSVCLSIFCGHSSSCSTCGTKFSLKIDLRKQLNNNPTTTTSATSTVNNKS</sequence>
<protein>
    <recommendedName>
        <fullName>General transcription factor IIH subunit 3</fullName>
    </recommendedName>
    <alternativeName>
        <fullName>TFIIH basal transcription factor complex subunit 3</fullName>
    </alternativeName>
</protein>
<comment type="function">
    <text evidence="2">Component of the general transcription and DNA repair factor IIH (TFIIH) core complex, which is involved in general and transcription-coupled nucleotide excision repair (NER) of damaged DNA and, when complexed to CAK, in RNA transcription by RNA polymerase II. In NER, TFIIH acts by opening DNA around the lesion to allow the excision of the damaged oligonucleotide and its replacement by a new DNA fragment. In transcription, TFIIH has an essential role in transcription initiation. When the pre-initiation complex (PIC) has been established, TFIIH is required for promoter opening and promoter escape. Phosphorylation of the C-terminal tail (CTD) of the largest subunit of RNA polymerase II by the kinase module CAK controls the initiation of transcription.</text>
</comment>
<comment type="subunit">
    <text evidence="2">Component of the 7-subunit TFIIH core complex composed of XPB/repB, XPD/repD, gtf2h1, gtf2h2, gtf2h3, gtf2h4 and gtf2h5, which is active in NER. The core complex associates with the 3-subunit CDK-activating kinase (CAK) module composed of cycH/cyclin H, cdk7 and mnat1 to form the 10-subunit holoenzyme (holo-TFIIH) active in transcription.</text>
</comment>
<comment type="subcellular location">
    <subcellularLocation>
        <location evidence="1">Nucleus</location>
    </subcellularLocation>
</comment>
<comment type="similarity">
    <text evidence="4">Belongs to the TFB4 family.</text>
</comment>
<proteinExistence type="inferred from homology"/>
<accession>Q86IB5</accession>
<accession>Q552R3</accession>
<dbReference type="EMBL" id="AAFI02000013">
    <property type="protein sequence ID" value="EAL69509.1"/>
    <property type="molecule type" value="Genomic_DNA"/>
</dbReference>
<dbReference type="RefSeq" id="XP_643618.1">
    <property type="nucleotide sequence ID" value="XM_638526.1"/>
</dbReference>
<dbReference type="SMR" id="Q86IB5"/>
<dbReference type="FunCoup" id="Q86IB5">
    <property type="interactions" value="907"/>
</dbReference>
<dbReference type="STRING" id="44689.Q86IB5"/>
<dbReference type="PaxDb" id="44689-DDB0230196"/>
<dbReference type="EnsemblProtists" id="EAL69509">
    <property type="protein sequence ID" value="EAL69509"/>
    <property type="gene ID" value="DDB_G0275517"/>
</dbReference>
<dbReference type="GeneID" id="8620205"/>
<dbReference type="KEGG" id="ddi:DDB_G0275517"/>
<dbReference type="dictyBase" id="DDB_G0275517">
    <property type="gene designation" value="gtf2h3"/>
</dbReference>
<dbReference type="VEuPathDB" id="AmoebaDB:DDB_G0275517"/>
<dbReference type="eggNOG" id="KOG2487">
    <property type="taxonomic scope" value="Eukaryota"/>
</dbReference>
<dbReference type="HOGENOM" id="CLU_040211_1_2_1"/>
<dbReference type="InParanoid" id="Q86IB5"/>
<dbReference type="OMA" id="QGCDITS"/>
<dbReference type="PhylomeDB" id="Q86IB5"/>
<dbReference type="Reactome" id="R-DDI-113418">
    <property type="pathway name" value="Formation of the Early Elongation Complex"/>
</dbReference>
<dbReference type="Reactome" id="R-DDI-5696395">
    <property type="pathway name" value="Formation of Incision Complex in GG-NER"/>
</dbReference>
<dbReference type="Reactome" id="R-DDI-674695">
    <property type="pathway name" value="RNA Polymerase II Pre-transcription Events"/>
</dbReference>
<dbReference type="Reactome" id="R-DDI-6781823">
    <property type="pathway name" value="Formation of TC-NER Pre-Incision Complex"/>
</dbReference>
<dbReference type="Reactome" id="R-DDI-6782135">
    <property type="pathway name" value="Dual incision in TC-NER"/>
</dbReference>
<dbReference type="Reactome" id="R-DDI-6782210">
    <property type="pathway name" value="Gap-filling DNA repair synthesis and ligation in TC-NER"/>
</dbReference>
<dbReference type="Reactome" id="R-DDI-6796648">
    <property type="pathway name" value="TP53 Regulates Transcription of DNA Repair Genes"/>
</dbReference>
<dbReference type="Reactome" id="R-DDI-72086">
    <property type="pathway name" value="mRNA Capping"/>
</dbReference>
<dbReference type="Reactome" id="R-DDI-73772">
    <property type="pathway name" value="RNA Polymerase I Promoter Escape"/>
</dbReference>
<dbReference type="Reactome" id="R-DDI-73776">
    <property type="pathway name" value="RNA Polymerase II Promoter Escape"/>
</dbReference>
<dbReference type="Reactome" id="R-DDI-73779">
    <property type="pathway name" value="RNA Polymerase II Transcription Pre-Initiation And Promoter Opening"/>
</dbReference>
<dbReference type="Reactome" id="R-DDI-75953">
    <property type="pathway name" value="RNA Polymerase II Transcription Initiation"/>
</dbReference>
<dbReference type="Reactome" id="R-DDI-76042">
    <property type="pathway name" value="RNA Polymerase II Transcription Initiation And Promoter Clearance"/>
</dbReference>
<dbReference type="Reactome" id="R-DDI-77075">
    <property type="pathway name" value="RNA Pol II CTD phosphorylation and interaction with CE"/>
</dbReference>
<dbReference type="PRO" id="PR:Q86IB5"/>
<dbReference type="Proteomes" id="UP000002195">
    <property type="component" value="Chromosome 2"/>
</dbReference>
<dbReference type="GO" id="GO:0000439">
    <property type="term" value="C:transcription factor TFIIH core complex"/>
    <property type="evidence" value="ECO:0000318"/>
    <property type="project" value="GO_Central"/>
</dbReference>
<dbReference type="GO" id="GO:0005675">
    <property type="term" value="C:transcription factor TFIIH holo complex"/>
    <property type="evidence" value="ECO:0000250"/>
    <property type="project" value="dictyBase"/>
</dbReference>
<dbReference type="GO" id="GO:0008270">
    <property type="term" value="F:zinc ion binding"/>
    <property type="evidence" value="ECO:0007669"/>
    <property type="project" value="UniProtKB-KW"/>
</dbReference>
<dbReference type="GO" id="GO:0006289">
    <property type="term" value="P:nucleotide-excision repair"/>
    <property type="evidence" value="ECO:0000318"/>
    <property type="project" value="GO_Central"/>
</dbReference>
<dbReference type="GO" id="GO:0006355">
    <property type="term" value="P:regulation of DNA-templated transcription"/>
    <property type="evidence" value="ECO:0007669"/>
    <property type="project" value="InterPro"/>
</dbReference>
<dbReference type="Gene3D" id="3.40.50.410">
    <property type="entry name" value="von Willebrand factor, type A domain"/>
    <property type="match status" value="1"/>
</dbReference>
<dbReference type="InterPro" id="IPR004600">
    <property type="entry name" value="TFIIH_Tfb4/GTF2H3"/>
</dbReference>
<dbReference type="InterPro" id="IPR036465">
    <property type="entry name" value="vWFA_dom_sf"/>
</dbReference>
<dbReference type="PANTHER" id="PTHR12831:SF0">
    <property type="entry name" value="GENERAL TRANSCRIPTION FACTOR IIH SUBUNIT 3"/>
    <property type="match status" value="1"/>
</dbReference>
<dbReference type="PANTHER" id="PTHR12831">
    <property type="entry name" value="TRANSCRIPTION INITIATION FACTOR IIH TFIIH , POLYPEPTIDE 3-RELATED"/>
    <property type="match status" value="1"/>
</dbReference>
<dbReference type="Pfam" id="PF03850">
    <property type="entry name" value="Tfb4"/>
    <property type="match status" value="1"/>
</dbReference>